<keyword id="KW-0687">Ribonucleoprotein</keyword>
<keyword id="KW-0689">Ribosomal protein</keyword>
<keyword id="KW-0694">RNA-binding</keyword>
<keyword id="KW-0699">rRNA-binding</keyword>
<protein>
    <recommendedName>
        <fullName evidence="1">Small ribosomal subunit protein uS3</fullName>
    </recommendedName>
    <alternativeName>
        <fullName evidence="3">30S ribosomal protein S3</fullName>
    </alternativeName>
</protein>
<gene>
    <name evidence="1" type="primary">rpsC</name>
    <name type="ordered locus">Tfu_2640</name>
</gene>
<name>RS3_THEFY</name>
<proteinExistence type="inferred from homology"/>
<sequence>MGQKVNPHGFRLGVTTDFKSRWFADKLYKDYVKEDVAIRQMLTRGMERAGISKVEIERTRERVRVDVHTARPGIVIGRRGAEADRIRANLEKLTNKQVQLNILEVKNPEIDAQLVAQGVAEQLSSRVAFRRAMRKAIQSAMKSGAKGIRVQCSGRLGGAEMSRSEFYREGRVPLHTLRADIDYGFFEARTTFGRIGVKVWIYKGEAPMTRAEREAAQAAQRAAGPQRRERPGRRRRGGGGGGGQQQQQAEKATAQATEAAKAAKSGNEGS</sequence>
<evidence type="ECO:0000255" key="1">
    <source>
        <dbReference type="HAMAP-Rule" id="MF_01309"/>
    </source>
</evidence>
<evidence type="ECO:0000256" key="2">
    <source>
        <dbReference type="SAM" id="MobiDB-lite"/>
    </source>
</evidence>
<evidence type="ECO:0000305" key="3"/>
<organism>
    <name type="scientific">Thermobifida fusca (strain YX)</name>
    <dbReference type="NCBI Taxonomy" id="269800"/>
    <lineage>
        <taxon>Bacteria</taxon>
        <taxon>Bacillati</taxon>
        <taxon>Actinomycetota</taxon>
        <taxon>Actinomycetes</taxon>
        <taxon>Streptosporangiales</taxon>
        <taxon>Nocardiopsidaceae</taxon>
        <taxon>Thermobifida</taxon>
    </lineage>
</organism>
<dbReference type="EMBL" id="CP000088">
    <property type="protein sequence ID" value="AAZ56673.1"/>
    <property type="molecule type" value="Genomic_DNA"/>
</dbReference>
<dbReference type="RefSeq" id="WP_011293063.1">
    <property type="nucleotide sequence ID" value="NC_007333.1"/>
</dbReference>
<dbReference type="SMR" id="Q47LJ9"/>
<dbReference type="STRING" id="269800.Tfu_2640"/>
<dbReference type="KEGG" id="tfu:Tfu_2640"/>
<dbReference type="eggNOG" id="COG0092">
    <property type="taxonomic scope" value="Bacteria"/>
</dbReference>
<dbReference type="HOGENOM" id="CLU_058591_0_2_11"/>
<dbReference type="OrthoDB" id="9806396at2"/>
<dbReference type="GO" id="GO:0022627">
    <property type="term" value="C:cytosolic small ribosomal subunit"/>
    <property type="evidence" value="ECO:0007669"/>
    <property type="project" value="TreeGrafter"/>
</dbReference>
<dbReference type="GO" id="GO:0003729">
    <property type="term" value="F:mRNA binding"/>
    <property type="evidence" value="ECO:0007669"/>
    <property type="project" value="UniProtKB-UniRule"/>
</dbReference>
<dbReference type="GO" id="GO:0019843">
    <property type="term" value="F:rRNA binding"/>
    <property type="evidence" value="ECO:0007669"/>
    <property type="project" value="UniProtKB-UniRule"/>
</dbReference>
<dbReference type="GO" id="GO:0003735">
    <property type="term" value="F:structural constituent of ribosome"/>
    <property type="evidence" value="ECO:0007669"/>
    <property type="project" value="InterPro"/>
</dbReference>
<dbReference type="GO" id="GO:0006412">
    <property type="term" value="P:translation"/>
    <property type="evidence" value="ECO:0007669"/>
    <property type="project" value="UniProtKB-UniRule"/>
</dbReference>
<dbReference type="CDD" id="cd02412">
    <property type="entry name" value="KH-II_30S_S3"/>
    <property type="match status" value="1"/>
</dbReference>
<dbReference type="FunFam" id="3.30.1140.32:FF:000002">
    <property type="entry name" value="30S ribosomal protein S3"/>
    <property type="match status" value="1"/>
</dbReference>
<dbReference type="FunFam" id="3.30.300.20:FF:000001">
    <property type="entry name" value="30S ribosomal protein S3"/>
    <property type="match status" value="1"/>
</dbReference>
<dbReference type="Gene3D" id="3.30.300.20">
    <property type="match status" value="1"/>
</dbReference>
<dbReference type="Gene3D" id="3.30.1140.32">
    <property type="entry name" value="Ribosomal protein S3, C-terminal domain"/>
    <property type="match status" value="1"/>
</dbReference>
<dbReference type="HAMAP" id="MF_01309_B">
    <property type="entry name" value="Ribosomal_uS3_B"/>
    <property type="match status" value="1"/>
</dbReference>
<dbReference type="InterPro" id="IPR004087">
    <property type="entry name" value="KH_dom"/>
</dbReference>
<dbReference type="InterPro" id="IPR015946">
    <property type="entry name" value="KH_dom-like_a/b"/>
</dbReference>
<dbReference type="InterPro" id="IPR004044">
    <property type="entry name" value="KH_dom_type_2"/>
</dbReference>
<dbReference type="InterPro" id="IPR009019">
    <property type="entry name" value="KH_sf_prok-type"/>
</dbReference>
<dbReference type="InterPro" id="IPR036419">
    <property type="entry name" value="Ribosomal_S3_C_sf"/>
</dbReference>
<dbReference type="InterPro" id="IPR005704">
    <property type="entry name" value="Ribosomal_uS3_bac-typ"/>
</dbReference>
<dbReference type="InterPro" id="IPR001351">
    <property type="entry name" value="Ribosomal_uS3_C"/>
</dbReference>
<dbReference type="InterPro" id="IPR018280">
    <property type="entry name" value="Ribosomal_uS3_CS"/>
</dbReference>
<dbReference type="NCBIfam" id="TIGR01009">
    <property type="entry name" value="rpsC_bact"/>
    <property type="match status" value="1"/>
</dbReference>
<dbReference type="PANTHER" id="PTHR11760">
    <property type="entry name" value="30S/40S RIBOSOMAL PROTEIN S3"/>
    <property type="match status" value="1"/>
</dbReference>
<dbReference type="PANTHER" id="PTHR11760:SF19">
    <property type="entry name" value="SMALL RIBOSOMAL SUBUNIT PROTEIN US3C"/>
    <property type="match status" value="1"/>
</dbReference>
<dbReference type="Pfam" id="PF07650">
    <property type="entry name" value="KH_2"/>
    <property type="match status" value="1"/>
</dbReference>
<dbReference type="Pfam" id="PF00189">
    <property type="entry name" value="Ribosomal_S3_C"/>
    <property type="match status" value="1"/>
</dbReference>
<dbReference type="SMART" id="SM00322">
    <property type="entry name" value="KH"/>
    <property type="match status" value="1"/>
</dbReference>
<dbReference type="SUPFAM" id="SSF54814">
    <property type="entry name" value="Prokaryotic type KH domain (KH-domain type II)"/>
    <property type="match status" value="1"/>
</dbReference>
<dbReference type="SUPFAM" id="SSF54821">
    <property type="entry name" value="Ribosomal protein S3 C-terminal domain"/>
    <property type="match status" value="1"/>
</dbReference>
<dbReference type="PROSITE" id="PS50823">
    <property type="entry name" value="KH_TYPE_2"/>
    <property type="match status" value="1"/>
</dbReference>
<dbReference type="PROSITE" id="PS00548">
    <property type="entry name" value="RIBOSOMAL_S3"/>
    <property type="match status" value="1"/>
</dbReference>
<accession>Q47LJ9</accession>
<reference key="1">
    <citation type="journal article" date="2007" name="J. Bacteriol.">
        <title>Genome sequence and analysis of the soil cellulolytic actinomycete Thermobifida fusca YX.</title>
        <authorList>
            <person name="Lykidis A."/>
            <person name="Mavromatis K."/>
            <person name="Ivanova N."/>
            <person name="Anderson I."/>
            <person name="Land M."/>
            <person name="DiBartolo G."/>
            <person name="Martinez M."/>
            <person name="Lapidus A."/>
            <person name="Lucas S."/>
            <person name="Copeland A."/>
            <person name="Richardson P."/>
            <person name="Wilson D.B."/>
            <person name="Kyrpides N."/>
        </authorList>
    </citation>
    <scope>NUCLEOTIDE SEQUENCE [LARGE SCALE GENOMIC DNA]</scope>
    <source>
        <strain>YX</strain>
    </source>
</reference>
<feature type="chain" id="PRO_0000230736" description="Small ribosomal subunit protein uS3">
    <location>
        <begin position="1"/>
        <end position="270"/>
    </location>
</feature>
<feature type="domain" description="KH type-2" evidence="1">
    <location>
        <begin position="38"/>
        <end position="106"/>
    </location>
</feature>
<feature type="region of interest" description="Disordered" evidence="2">
    <location>
        <begin position="212"/>
        <end position="270"/>
    </location>
</feature>
<feature type="compositionally biased region" description="Low complexity" evidence="2">
    <location>
        <begin position="216"/>
        <end position="225"/>
    </location>
</feature>
<feature type="compositionally biased region" description="Low complexity" evidence="2">
    <location>
        <begin position="245"/>
        <end position="263"/>
    </location>
</feature>
<comment type="function">
    <text evidence="1">Binds the lower part of the 30S subunit head. Binds mRNA in the 70S ribosome, positioning it for translation.</text>
</comment>
<comment type="subunit">
    <text evidence="1">Part of the 30S ribosomal subunit. Forms a tight complex with proteins S10 and S14.</text>
</comment>
<comment type="similarity">
    <text evidence="1">Belongs to the universal ribosomal protein uS3 family.</text>
</comment>